<protein>
    <recommendedName>
        <fullName evidence="1">DNA-directed RNA polymerase subunit omega</fullName>
        <shortName evidence="1">RNAP omega subunit</shortName>
        <ecNumber evidence="1">2.7.7.6</ecNumber>
    </recommendedName>
    <alternativeName>
        <fullName evidence="1">RNA polymerase omega subunit</fullName>
    </alternativeName>
    <alternativeName>
        <fullName evidence="1">Transcriptase subunit omega</fullName>
    </alternativeName>
</protein>
<proteinExistence type="inferred from homology"/>
<accession>Q1GDG8</accession>
<reference key="1">
    <citation type="submission" date="2006-05" db="EMBL/GenBank/DDBJ databases">
        <title>Complete sequence of chromosome of Silicibacter sp. TM1040.</title>
        <authorList>
            <consortium name="US DOE Joint Genome Institute"/>
            <person name="Copeland A."/>
            <person name="Lucas S."/>
            <person name="Lapidus A."/>
            <person name="Barry K."/>
            <person name="Detter J.C."/>
            <person name="Glavina del Rio T."/>
            <person name="Hammon N."/>
            <person name="Israni S."/>
            <person name="Dalin E."/>
            <person name="Tice H."/>
            <person name="Pitluck S."/>
            <person name="Brettin T."/>
            <person name="Bruce D."/>
            <person name="Han C."/>
            <person name="Tapia R."/>
            <person name="Goodwin L."/>
            <person name="Thompson L.S."/>
            <person name="Gilna P."/>
            <person name="Schmutz J."/>
            <person name="Larimer F."/>
            <person name="Land M."/>
            <person name="Hauser L."/>
            <person name="Kyrpides N."/>
            <person name="Kim E."/>
            <person name="Belas R."/>
            <person name="Moran M.A."/>
            <person name="Buchan A."/>
            <person name="Gonzalez J.M."/>
            <person name="Schell M.A."/>
            <person name="Sun F."/>
            <person name="Richardson P."/>
        </authorList>
    </citation>
    <scope>NUCLEOTIDE SEQUENCE [LARGE SCALE GENOMIC DNA]</scope>
    <source>
        <strain>TM1040</strain>
    </source>
</reference>
<keyword id="KW-0240">DNA-directed RNA polymerase</keyword>
<keyword id="KW-0548">Nucleotidyltransferase</keyword>
<keyword id="KW-1185">Reference proteome</keyword>
<keyword id="KW-0804">Transcription</keyword>
<keyword id="KW-0808">Transferase</keyword>
<comment type="function">
    <text evidence="1">Promotes RNA polymerase assembly. Latches the N- and C-terminal regions of the beta' subunit thereby facilitating its interaction with the beta and alpha subunits.</text>
</comment>
<comment type="catalytic activity">
    <reaction evidence="1">
        <text>RNA(n) + a ribonucleoside 5'-triphosphate = RNA(n+1) + diphosphate</text>
        <dbReference type="Rhea" id="RHEA:21248"/>
        <dbReference type="Rhea" id="RHEA-COMP:14527"/>
        <dbReference type="Rhea" id="RHEA-COMP:17342"/>
        <dbReference type="ChEBI" id="CHEBI:33019"/>
        <dbReference type="ChEBI" id="CHEBI:61557"/>
        <dbReference type="ChEBI" id="CHEBI:140395"/>
        <dbReference type="EC" id="2.7.7.6"/>
    </reaction>
</comment>
<comment type="subunit">
    <text evidence="1">The RNAP catalytic core consists of 2 alpha, 1 beta, 1 beta' and 1 omega subunit. When a sigma factor is associated with the core the holoenzyme is formed, which can initiate transcription.</text>
</comment>
<comment type="similarity">
    <text evidence="1">Belongs to the RNA polymerase subunit omega family.</text>
</comment>
<feature type="chain" id="PRO_1000006018" description="DNA-directed RNA polymerase subunit omega">
    <location>
        <begin position="1"/>
        <end position="117"/>
    </location>
</feature>
<gene>
    <name evidence="1" type="primary">rpoZ</name>
    <name type="ordered locus">TM1040_2566</name>
</gene>
<dbReference type="EC" id="2.7.7.6" evidence="1"/>
<dbReference type="EMBL" id="CP000377">
    <property type="protein sequence ID" value="ABF65298.1"/>
    <property type="molecule type" value="Genomic_DNA"/>
</dbReference>
<dbReference type="RefSeq" id="WP_005615037.1">
    <property type="nucleotide sequence ID" value="NC_008044.1"/>
</dbReference>
<dbReference type="SMR" id="Q1GDG8"/>
<dbReference type="STRING" id="292414.TM1040_2566"/>
<dbReference type="GeneID" id="28250633"/>
<dbReference type="KEGG" id="sit:TM1040_2566"/>
<dbReference type="eggNOG" id="COG1758">
    <property type="taxonomic scope" value="Bacteria"/>
</dbReference>
<dbReference type="HOGENOM" id="CLU_125406_2_0_5"/>
<dbReference type="OrthoDB" id="9796300at2"/>
<dbReference type="Proteomes" id="UP000000636">
    <property type="component" value="Chromosome"/>
</dbReference>
<dbReference type="GO" id="GO:0000428">
    <property type="term" value="C:DNA-directed RNA polymerase complex"/>
    <property type="evidence" value="ECO:0007669"/>
    <property type="project" value="UniProtKB-KW"/>
</dbReference>
<dbReference type="GO" id="GO:0003677">
    <property type="term" value="F:DNA binding"/>
    <property type="evidence" value="ECO:0007669"/>
    <property type="project" value="UniProtKB-UniRule"/>
</dbReference>
<dbReference type="GO" id="GO:0003899">
    <property type="term" value="F:DNA-directed RNA polymerase activity"/>
    <property type="evidence" value="ECO:0007669"/>
    <property type="project" value="UniProtKB-UniRule"/>
</dbReference>
<dbReference type="GO" id="GO:0006351">
    <property type="term" value="P:DNA-templated transcription"/>
    <property type="evidence" value="ECO:0007669"/>
    <property type="project" value="UniProtKB-UniRule"/>
</dbReference>
<dbReference type="Gene3D" id="3.90.940.10">
    <property type="match status" value="1"/>
</dbReference>
<dbReference type="HAMAP" id="MF_00366">
    <property type="entry name" value="RNApol_bact_RpoZ"/>
    <property type="match status" value="1"/>
</dbReference>
<dbReference type="InterPro" id="IPR003716">
    <property type="entry name" value="DNA-dir_RNA_pol_omega"/>
</dbReference>
<dbReference type="InterPro" id="IPR006110">
    <property type="entry name" value="Pol_omega/Rpo6/RPB6"/>
</dbReference>
<dbReference type="InterPro" id="IPR036161">
    <property type="entry name" value="RPB6/omega-like_sf"/>
</dbReference>
<dbReference type="NCBIfam" id="TIGR00690">
    <property type="entry name" value="rpoZ"/>
    <property type="match status" value="1"/>
</dbReference>
<dbReference type="PANTHER" id="PTHR34476">
    <property type="entry name" value="DNA-DIRECTED RNA POLYMERASE SUBUNIT OMEGA"/>
    <property type="match status" value="1"/>
</dbReference>
<dbReference type="PANTHER" id="PTHR34476:SF1">
    <property type="entry name" value="DNA-DIRECTED RNA POLYMERASE SUBUNIT OMEGA"/>
    <property type="match status" value="1"/>
</dbReference>
<dbReference type="Pfam" id="PF01192">
    <property type="entry name" value="RNA_pol_Rpb6"/>
    <property type="match status" value="1"/>
</dbReference>
<dbReference type="SMART" id="SM01409">
    <property type="entry name" value="RNA_pol_Rpb6"/>
    <property type="match status" value="1"/>
</dbReference>
<dbReference type="SUPFAM" id="SSF63562">
    <property type="entry name" value="RPB6/omega subunit-like"/>
    <property type="match status" value="1"/>
</dbReference>
<organism>
    <name type="scientific">Ruegeria sp. (strain TM1040)</name>
    <name type="common">Silicibacter sp.</name>
    <dbReference type="NCBI Taxonomy" id="292414"/>
    <lineage>
        <taxon>Bacteria</taxon>
        <taxon>Pseudomonadati</taxon>
        <taxon>Pseudomonadota</taxon>
        <taxon>Alphaproteobacteria</taxon>
        <taxon>Rhodobacterales</taxon>
        <taxon>Roseobacteraceae</taxon>
        <taxon>Ruegeria</taxon>
    </lineage>
</organism>
<sequence>MARVTVEDCVDKVPNRFELVMLAAHRAREISAGAELTVDRDNDKNPVVSLREIAEETQSADALRERLIESNQSQIEVDEPEEDSMALLMGGEADKPQEDDMSEEKLLRALMEAQGQG</sequence>
<evidence type="ECO:0000255" key="1">
    <source>
        <dbReference type="HAMAP-Rule" id="MF_00366"/>
    </source>
</evidence>
<name>RPOZ_RUEST</name>